<proteinExistence type="inferred from homology"/>
<dbReference type="EC" id="2.7.1.167" evidence="1"/>
<dbReference type="EC" id="2.7.7.70" evidence="1"/>
<dbReference type="EMBL" id="CP000767">
    <property type="protein sequence ID" value="EAU01319.1"/>
    <property type="molecule type" value="Genomic_DNA"/>
</dbReference>
<dbReference type="RefSeq" id="WP_011992495.1">
    <property type="nucleotide sequence ID" value="NC_009715.2"/>
</dbReference>
<dbReference type="SMR" id="A7GZF6"/>
<dbReference type="STRING" id="360105.CCV52592_0244"/>
<dbReference type="KEGG" id="ccv:CCV52592_0244"/>
<dbReference type="HOGENOM" id="CLU_021150_2_1_7"/>
<dbReference type="OrthoDB" id="9802794at2"/>
<dbReference type="UniPathway" id="UPA00356">
    <property type="reaction ID" value="UER00437"/>
</dbReference>
<dbReference type="UniPathway" id="UPA00356">
    <property type="reaction ID" value="UER00439"/>
</dbReference>
<dbReference type="Proteomes" id="UP000006380">
    <property type="component" value="Chromosome"/>
</dbReference>
<dbReference type="GO" id="GO:0005829">
    <property type="term" value="C:cytosol"/>
    <property type="evidence" value="ECO:0007669"/>
    <property type="project" value="TreeGrafter"/>
</dbReference>
<dbReference type="GO" id="GO:0005524">
    <property type="term" value="F:ATP binding"/>
    <property type="evidence" value="ECO:0007669"/>
    <property type="project" value="UniProtKB-UniRule"/>
</dbReference>
<dbReference type="GO" id="GO:0033785">
    <property type="term" value="F:heptose 7-phosphate kinase activity"/>
    <property type="evidence" value="ECO:0007669"/>
    <property type="project" value="UniProtKB-UniRule"/>
</dbReference>
<dbReference type="GO" id="GO:0033786">
    <property type="term" value="F:heptose-1-phosphate adenylyltransferase activity"/>
    <property type="evidence" value="ECO:0007669"/>
    <property type="project" value="UniProtKB-UniRule"/>
</dbReference>
<dbReference type="GO" id="GO:0016773">
    <property type="term" value="F:phosphotransferase activity, alcohol group as acceptor"/>
    <property type="evidence" value="ECO:0007669"/>
    <property type="project" value="InterPro"/>
</dbReference>
<dbReference type="GO" id="GO:0097171">
    <property type="term" value="P:ADP-L-glycero-beta-D-manno-heptose biosynthetic process"/>
    <property type="evidence" value="ECO:0007669"/>
    <property type="project" value="UniProtKB-UniPathway"/>
</dbReference>
<dbReference type="CDD" id="cd01172">
    <property type="entry name" value="RfaE_like"/>
    <property type="match status" value="1"/>
</dbReference>
<dbReference type="Gene3D" id="3.40.1190.20">
    <property type="match status" value="1"/>
</dbReference>
<dbReference type="Gene3D" id="3.40.50.620">
    <property type="entry name" value="HUPs"/>
    <property type="match status" value="1"/>
</dbReference>
<dbReference type="HAMAP" id="MF_01603">
    <property type="entry name" value="HldE"/>
    <property type="match status" value="1"/>
</dbReference>
<dbReference type="InterPro" id="IPR023030">
    <property type="entry name" value="Bifunc_HldE"/>
</dbReference>
<dbReference type="InterPro" id="IPR004821">
    <property type="entry name" value="Cyt_trans-like"/>
</dbReference>
<dbReference type="InterPro" id="IPR011611">
    <property type="entry name" value="PfkB_dom"/>
</dbReference>
<dbReference type="InterPro" id="IPR011913">
    <property type="entry name" value="RfaE_dom_I"/>
</dbReference>
<dbReference type="InterPro" id="IPR011914">
    <property type="entry name" value="RfaE_dom_II"/>
</dbReference>
<dbReference type="InterPro" id="IPR029056">
    <property type="entry name" value="Ribokinase-like"/>
</dbReference>
<dbReference type="InterPro" id="IPR014729">
    <property type="entry name" value="Rossmann-like_a/b/a_fold"/>
</dbReference>
<dbReference type="NCBIfam" id="TIGR00125">
    <property type="entry name" value="cyt_tran_rel"/>
    <property type="match status" value="1"/>
</dbReference>
<dbReference type="NCBIfam" id="TIGR02198">
    <property type="entry name" value="rfaE_dom_I"/>
    <property type="match status" value="1"/>
</dbReference>
<dbReference type="NCBIfam" id="TIGR02199">
    <property type="entry name" value="rfaE_dom_II"/>
    <property type="match status" value="1"/>
</dbReference>
<dbReference type="PANTHER" id="PTHR46969">
    <property type="entry name" value="BIFUNCTIONAL PROTEIN HLDE"/>
    <property type="match status" value="1"/>
</dbReference>
<dbReference type="PANTHER" id="PTHR46969:SF1">
    <property type="entry name" value="BIFUNCTIONAL PROTEIN HLDE"/>
    <property type="match status" value="1"/>
</dbReference>
<dbReference type="Pfam" id="PF01467">
    <property type="entry name" value="CTP_transf_like"/>
    <property type="match status" value="1"/>
</dbReference>
<dbReference type="Pfam" id="PF00294">
    <property type="entry name" value="PfkB"/>
    <property type="match status" value="1"/>
</dbReference>
<dbReference type="SUPFAM" id="SSF52374">
    <property type="entry name" value="Nucleotidylyl transferase"/>
    <property type="match status" value="1"/>
</dbReference>
<dbReference type="SUPFAM" id="SSF53613">
    <property type="entry name" value="Ribokinase-like"/>
    <property type="match status" value="1"/>
</dbReference>
<sequence>MAKKVEILVVGDLMLDHYIWGSCDRISPEAPVQVVKIAKETHRLGGAGNVVQNLLALGAKVSVASVVGDDEVGLRIKNMLSELGAGGGLILSEKGRESSIKSRVMASHQQVVRIDKESAVKINLESELVQKVTENLKNFSVVLLSDYGKGVLSDKVCRDIINECVRLDIPVLIDPKGNDYSKYKNATLLTPNRKEASEATGIAIKNTIDLRAAIMKLKNELNLKYSIVTLSEEGIALFDKELEIFPAEAKEVFDVTGAGDTVLATLGFMLASKKDIKEAIKMANLAAAVVVAKIGSATANFGEIEELLRSRANAEFEHKIKSAEQVAEILSQRGEKKVVFTNGCFDILHAGHARYLAKARDFGDILIVGLNSDASVRRLKGESRPINSQLDRACVLSGLGFVDYVVIFDEDTPMELIKKLRPDILVKGADYEGKEVVGSDIVKDVRLVEFVDGKSTSAIVKRIKDADK</sequence>
<feature type="chain" id="PRO_0000335555" description="Bifunctional protein HldE">
    <location>
        <begin position="1"/>
        <end position="468"/>
    </location>
</feature>
<feature type="region of interest" description="Ribokinase">
    <location>
        <begin position="1"/>
        <end position="315"/>
    </location>
</feature>
<feature type="region of interest" description="Cytidylyltransferase">
    <location>
        <begin position="340"/>
        <end position="468"/>
    </location>
</feature>
<feature type="active site" evidence="1">
    <location>
        <position position="260"/>
    </location>
</feature>
<feature type="binding site" evidence="1">
    <location>
        <begin position="192"/>
        <end position="195"/>
    </location>
    <ligand>
        <name>ATP</name>
        <dbReference type="ChEBI" id="CHEBI:30616"/>
    </ligand>
</feature>
<keyword id="KW-0067">ATP-binding</keyword>
<keyword id="KW-0119">Carbohydrate metabolism</keyword>
<keyword id="KW-0418">Kinase</keyword>
<keyword id="KW-0511">Multifunctional enzyme</keyword>
<keyword id="KW-0547">Nucleotide-binding</keyword>
<keyword id="KW-0548">Nucleotidyltransferase</keyword>
<keyword id="KW-1185">Reference proteome</keyword>
<keyword id="KW-0808">Transferase</keyword>
<accession>A7GZF6</accession>
<protein>
    <recommendedName>
        <fullName evidence="1">Bifunctional protein HldE</fullName>
    </recommendedName>
    <domain>
        <recommendedName>
            <fullName evidence="1">D-beta-D-heptose 7-phosphate kinase</fullName>
            <ecNumber evidence="1">2.7.1.167</ecNumber>
        </recommendedName>
        <alternativeName>
            <fullName evidence="1">D-beta-D-heptose 7-phosphotransferase</fullName>
        </alternativeName>
        <alternativeName>
            <fullName evidence="1">D-glycero-beta-D-manno-heptose-7-phosphate kinase</fullName>
        </alternativeName>
    </domain>
    <domain>
        <recommendedName>
            <fullName evidence="1">D-beta-D-heptose 1-phosphate adenylyltransferase</fullName>
            <ecNumber evidence="1">2.7.7.70</ecNumber>
        </recommendedName>
        <alternativeName>
            <fullName evidence="1">D-glycero-beta-D-manno-heptose 1-phosphate adenylyltransferase</fullName>
        </alternativeName>
    </domain>
</protein>
<evidence type="ECO:0000255" key="1">
    <source>
        <dbReference type="HAMAP-Rule" id="MF_01603"/>
    </source>
</evidence>
<reference key="1">
    <citation type="submission" date="2007-07" db="EMBL/GenBank/DDBJ databases">
        <title>Genome sequence of Campylobacter curvus 525.92 isolated from human feces.</title>
        <authorList>
            <person name="Fouts D.E."/>
            <person name="Mongodin E.F."/>
            <person name="Puiu D."/>
            <person name="Sebastian Y."/>
            <person name="Miller W.G."/>
            <person name="Mandrell R.E."/>
            <person name="Lastovica A.J."/>
            <person name="Nelson K.E."/>
        </authorList>
    </citation>
    <scope>NUCLEOTIDE SEQUENCE [LARGE SCALE GENOMIC DNA]</scope>
    <source>
        <strain>525.92</strain>
    </source>
</reference>
<comment type="function">
    <text evidence="1">Catalyzes the phosphorylation of D-glycero-D-manno-heptose 7-phosphate at the C-1 position to selectively form D-glycero-beta-D-manno-heptose-1,7-bisphosphate.</text>
</comment>
<comment type="function">
    <text evidence="1">Catalyzes the ADP transfer from ATP to D-glycero-beta-D-manno-heptose 1-phosphate, yielding ADP-D-glycero-beta-D-manno-heptose.</text>
</comment>
<comment type="catalytic activity">
    <reaction evidence="1">
        <text>D-glycero-beta-D-manno-heptose 7-phosphate + ATP = D-glycero-beta-D-manno-heptose 1,7-bisphosphate + ADP + H(+)</text>
        <dbReference type="Rhea" id="RHEA:27473"/>
        <dbReference type="ChEBI" id="CHEBI:15378"/>
        <dbReference type="ChEBI" id="CHEBI:30616"/>
        <dbReference type="ChEBI" id="CHEBI:60204"/>
        <dbReference type="ChEBI" id="CHEBI:60208"/>
        <dbReference type="ChEBI" id="CHEBI:456216"/>
        <dbReference type="EC" id="2.7.1.167"/>
    </reaction>
</comment>
<comment type="catalytic activity">
    <reaction evidence="1">
        <text>D-glycero-beta-D-manno-heptose 1-phosphate + ATP + H(+) = ADP-D-glycero-beta-D-manno-heptose + diphosphate</text>
        <dbReference type="Rhea" id="RHEA:27465"/>
        <dbReference type="ChEBI" id="CHEBI:15378"/>
        <dbReference type="ChEBI" id="CHEBI:30616"/>
        <dbReference type="ChEBI" id="CHEBI:33019"/>
        <dbReference type="ChEBI" id="CHEBI:59967"/>
        <dbReference type="ChEBI" id="CHEBI:61593"/>
        <dbReference type="EC" id="2.7.7.70"/>
    </reaction>
</comment>
<comment type="pathway">
    <text evidence="1">Nucleotide-sugar biosynthesis; ADP-L-glycero-beta-D-manno-heptose biosynthesis; ADP-L-glycero-beta-D-manno-heptose from D-glycero-beta-D-manno-heptose 7-phosphate: step 1/4.</text>
</comment>
<comment type="pathway">
    <text evidence="1">Nucleotide-sugar biosynthesis; ADP-L-glycero-beta-D-manno-heptose biosynthesis; ADP-L-glycero-beta-D-manno-heptose from D-glycero-beta-D-manno-heptose 7-phosphate: step 3/4.</text>
</comment>
<comment type="subunit">
    <text evidence="1">Homodimer.</text>
</comment>
<comment type="similarity">
    <text evidence="1">In the N-terminal section; belongs to the carbohydrate kinase PfkB family.</text>
</comment>
<comment type="similarity">
    <text evidence="1">In the C-terminal section; belongs to the cytidylyltransferase family.</text>
</comment>
<gene>
    <name evidence="1" type="primary">hldE</name>
    <name type="ordered locus">Ccur92_12940</name>
    <name type="ORF">CCV52592_0244</name>
</gene>
<name>HLDE_CAMC5</name>
<organism>
    <name type="scientific">Campylobacter curvus (strain 525.92)</name>
    <dbReference type="NCBI Taxonomy" id="360105"/>
    <lineage>
        <taxon>Bacteria</taxon>
        <taxon>Pseudomonadati</taxon>
        <taxon>Campylobacterota</taxon>
        <taxon>Epsilonproteobacteria</taxon>
        <taxon>Campylobacterales</taxon>
        <taxon>Campylobacteraceae</taxon>
        <taxon>Campylobacter</taxon>
    </lineage>
</organism>